<name>TRM10_ASPFU</name>
<evidence type="ECO:0000250" key="1">
    <source>
        <dbReference type="UniProtKB" id="O14214"/>
    </source>
</evidence>
<evidence type="ECO:0000250" key="2">
    <source>
        <dbReference type="UniProtKB" id="Q12400"/>
    </source>
</evidence>
<evidence type="ECO:0000255" key="3">
    <source>
        <dbReference type="PROSITE-ProRule" id="PRU01012"/>
    </source>
</evidence>
<evidence type="ECO:0000256" key="4">
    <source>
        <dbReference type="SAM" id="MobiDB-lite"/>
    </source>
</evidence>
<sequence>MEDDDRPRKYPKLNHDEVQEGSEPVMTGAVGAVHDDDAESADSDNRASPSNDRIDNDVKQACDEEGQDAHGKDGPPTLSKNQLKKLKRKEHWEAMREQRKVKRKEKLVAKRERRRAALEQAKQEGAEATEETRKAFESTQKKFQRSTLLPVTLVLDCSYDDLMLDKERVSLGAQITRSYSDNSRAPFRSHLVVSSFNKLLKERFDTVLGKTHENWKGVRFLQEDFAEAAEMAKEWMQGPKGGQLAGVFADKADAKPEDGEIVYLSSDSPNILTELKPYSTYIIGGLVDKNRHKGICYKSAVAKGIKTAKLPIGEYIQMAHRQVLATNHVVEIMIRWLELGDWGKAFIQVIPQRKGGKLKSADHESEDQTPRESVEAVEAEPDGEGAAAEAGEGGKE</sequence>
<accession>Q4WXA1</accession>
<protein>
    <recommendedName>
        <fullName evidence="2">tRNA (guanine(9)-N1)-methyltransferase</fullName>
        <ecNumber evidence="2">2.1.1.221</ecNumber>
    </recommendedName>
    <alternativeName>
        <fullName evidence="2">tRNA methyltransferase 10</fullName>
    </alternativeName>
    <alternativeName>
        <fullName evidence="2">tRNA(m1G9)-methyltransferase</fullName>
        <shortName evidence="2">tRNA(m1G9)MTase</shortName>
    </alternativeName>
</protein>
<proteinExistence type="inferred from homology"/>
<feature type="chain" id="PRO_0000060510" description="tRNA (guanine(9)-N1)-methyltransferase">
    <location>
        <begin position="1"/>
        <end position="396"/>
    </location>
</feature>
<feature type="domain" description="SAM-dependent MTase TRM10-type" evidence="3">
    <location>
        <begin position="139"/>
        <end position="357"/>
    </location>
</feature>
<feature type="region of interest" description="Disordered" evidence="4">
    <location>
        <begin position="1"/>
        <end position="109"/>
    </location>
</feature>
<feature type="region of interest" description="Disordered" evidence="4">
    <location>
        <begin position="354"/>
        <end position="396"/>
    </location>
</feature>
<feature type="compositionally biased region" description="Basic and acidic residues" evidence="4">
    <location>
        <begin position="1"/>
        <end position="18"/>
    </location>
</feature>
<feature type="compositionally biased region" description="Basic and acidic residues" evidence="4">
    <location>
        <begin position="52"/>
        <end position="73"/>
    </location>
</feature>
<feature type="compositionally biased region" description="Basic and acidic residues" evidence="4">
    <location>
        <begin position="359"/>
        <end position="374"/>
    </location>
</feature>
<feature type="active site" description="Proton acceptor" evidence="1">
    <location>
        <position position="288"/>
    </location>
</feature>
<feature type="binding site" evidence="2">
    <location>
        <begin position="264"/>
        <end position="265"/>
    </location>
    <ligand>
        <name>S-adenosyl-L-methionine</name>
        <dbReference type="ChEBI" id="CHEBI:59789"/>
    </ligand>
</feature>
<feature type="binding site" evidence="2">
    <location>
        <position position="284"/>
    </location>
    <ligand>
        <name>S-adenosyl-L-methionine</name>
        <dbReference type="ChEBI" id="CHEBI:59789"/>
    </ligand>
</feature>
<feature type="binding site" evidence="2">
    <location>
        <begin position="288"/>
        <end position="292"/>
    </location>
    <ligand>
        <name>S-adenosyl-L-methionine</name>
        <dbReference type="ChEBI" id="CHEBI:59789"/>
    </ligand>
</feature>
<feature type="binding site" evidence="2">
    <location>
        <position position="296"/>
    </location>
    <ligand>
        <name>S-adenosyl-L-methionine</name>
        <dbReference type="ChEBI" id="CHEBI:59789"/>
    </ligand>
</feature>
<feature type="binding site" evidence="2">
    <location>
        <position position="310"/>
    </location>
    <ligand>
        <name>S-adenosyl-L-methionine</name>
        <dbReference type="ChEBI" id="CHEBI:59789"/>
    </ligand>
</feature>
<feature type="binding site" evidence="2">
    <location>
        <begin position="322"/>
        <end position="324"/>
    </location>
    <ligand>
        <name>S-adenosyl-L-methionine</name>
        <dbReference type="ChEBI" id="CHEBI:59789"/>
    </ligand>
</feature>
<dbReference type="EC" id="2.1.1.221" evidence="2"/>
<dbReference type="EMBL" id="AAHF01000002">
    <property type="protein sequence ID" value="EAL92702.1"/>
    <property type="molecule type" value="Genomic_DNA"/>
</dbReference>
<dbReference type="RefSeq" id="XP_754740.1">
    <property type="nucleotide sequence ID" value="XM_749647.1"/>
</dbReference>
<dbReference type="SMR" id="Q4WXA1"/>
<dbReference type="FunCoup" id="Q4WXA1">
    <property type="interactions" value="765"/>
</dbReference>
<dbReference type="STRING" id="330879.Q4WXA1"/>
<dbReference type="EnsemblFungi" id="EAL92702">
    <property type="protein sequence ID" value="EAL92702"/>
    <property type="gene ID" value="AFUA_3G08760"/>
</dbReference>
<dbReference type="GeneID" id="3512093"/>
<dbReference type="KEGG" id="afm:AFUA_3G08760"/>
<dbReference type="VEuPathDB" id="FungiDB:Afu3g08760"/>
<dbReference type="eggNOG" id="KOG2967">
    <property type="taxonomic scope" value="Eukaryota"/>
</dbReference>
<dbReference type="HOGENOM" id="CLU_034384_0_0_1"/>
<dbReference type="InParanoid" id="Q4WXA1"/>
<dbReference type="OMA" id="AWTETRD"/>
<dbReference type="OrthoDB" id="278300at2759"/>
<dbReference type="Proteomes" id="UP000002530">
    <property type="component" value="Chromosome 3"/>
</dbReference>
<dbReference type="GO" id="GO:0005737">
    <property type="term" value="C:cytoplasm"/>
    <property type="evidence" value="ECO:0007669"/>
    <property type="project" value="UniProtKB-SubCell"/>
</dbReference>
<dbReference type="GO" id="GO:0005634">
    <property type="term" value="C:nucleus"/>
    <property type="evidence" value="ECO:0000318"/>
    <property type="project" value="GO_Central"/>
</dbReference>
<dbReference type="GO" id="GO:0052905">
    <property type="term" value="F:tRNA (guanosine(9)-N1)-methyltransferase activity"/>
    <property type="evidence" value="ECO:0007669"/>
    <property type="project" value="UniProtKB-EC"/>
</dbReference>
<dbReference type="GO" id="GO:0000049">
    <property type="term" value="F:tRNA binding"/>
    <property type="evidence" value="ECO:0000318"/>
    <property type="project" value="GO_Central"/>
</dbReference>
<dbReference type="GO" id="GO:0002939">
    <property type="term" value="P:tRNA N1-guanine methylation"/>
    <property type="evidence" value="ECO:0000318"/>
    <property type="project" value="GO_Central"/>
</dbReference>
<dbReference type="CDD" id="cd18089">
    <property type="entry name" value="SPOUT_Trm10-like"/>
    <property type="match status" value="1"/>
</dbReference>
<dbReference type="FunFam" id="3.40.1280.30:FF:000004">
    <property type="entry name" value="tRNA (guanine(9)-N1)-methyltransferase"/>
    <property type="match status" value="1"/>
</dbReference>
<dbReference type="Gene3D" id="3.40.1280.30">
    <property type="match status" value="1"/>
</dbReference>
<dbReference type="InterPro" id="IPR028564">
    <property type="entry name" value="MT_TRM10-typ"/>
</dbReference>
<dbReference type="InterPro" id="IPR038459">
    <property type="entry name" value="MT_TRM10-typ_sf"/>
</dbReference>
<dbReference type="InterPro" id="IPR007356">
    <property type="entry name" value="tRNA_m1G_MeTrfase_euk"/>
</dbReference>
<dbReference type="InterPro" id="IPR016009">
    <property type="entry name" value="tRNA_MeTrfase_TRMD/TRM10"/>
</dbReference>
<dbReference type="PANTHER" id="PTHR13563">
    <property type="entry name" value="TRNA (GUANINE-9-) METHYLTRANSFERASE"/>
    <property type="match status" value="1"/>
</dbReference>
<dbReference type="PANTHER" id="PTHR13563:SF13">
    <property type="entry name" value="TRNA METHYLTRANSFERASE 10 HOMOLOG A"/>
    <property type="match status" value="1"/>
</dbReference>
<dbReference type="Pfam" id="PF01746">
    <property type="entry name" value="tRNA_m1G_MT"/>
    <property type="match status" value="1"/>
</dbReference>
<dbReference type="PROSITE" id="PS51675">
    <property type="entry name" value="SAM_MT_TRM10"/>
    <property type="match status" value="1"/>
</dbReference>
<gene>
    <name evidence="2" type="primary">trm10</name>
    <name type="ORF">AFUA_3G08760</name>
</gene>
<keyword id="KW-0963">Cytoplasm</keyword>
<keyword id="KW-0489">Methyltransferase</keyword>
<keyword id="KW-0539">Nucleus</keyword>
<keyword id="KW-1185">Reference proteome</keyword>
<keyword id="KW-0949">S-adenosyl-L-methionine</keyword>
<keyword id="KW-0808">Transferase</keyword>
<keyword id="KW-0819">tRNA processing</keyword>
<comment type="function">
    <text evidence="2">S-adenosyl-L-methionine-dependent guanine N(1)-methyltransferase that catalyzes the formation of N(1)-methylguanine at position 9 (m1G9) in cytoplasmic tRNA.</text>
</comment>
<comment type="catalytic activity">
    <reaction evidence="2">
        <text>guanosine(9) in tRNA + S-adenosyl-L-methionine = N(1)-methylguanosine(9) in tRNA + S-adenosyl-L-homocysteine + H(+)</text>
        <dbReference type="Rhea" id="RHEA:43156"/>
        <dbReference type="Rhea" id="RHEA-COMP:10367"/>
        <dbReference type="Rhea" id="RHEA-COMP:10368"/>
        <dbReference type="ChEBI" id="CHEBI:15378"/>
        <dbReference type="ChEBI" id="CHEBI:57856"/>
        <dbReference type="ChEBI" id="CHEBI:59789"/>
        <dbReference type="ChEBI" id="CHEBI:73542"/>
        <dbReference type="ChEBI" id="CHEBI:74269"/>
        <dbReference type="EC" id="2.1.1.221"/>
    </reaction>
</comment>
<comment type="subunit">
    <text evidence="1">Monomer.</text>
</comment>
<comment type="subcellular location">
    <subcellularLocation>
        <location evidence="2">Cytoplasm</location>
    </subcellularLocation>
    <subcellularLocation>
        <location evidence="2">Nucleus</location>
    </subcellularLocation>
</comment>
<comment type="similarity">
    <text evidence="3">Belongs to the class IV-like SAM-binding methyltransferase superfamily. TRM10 family.</text>
</comment>
<organism>
    <name type="scientific">Aspergillus fumigatus (strain ATCC MYA-4609 / CBS 101355 / FGSC A1100 / Af293)</name>
    <name type="common">Neosartorya fumigata</name>
    <dbReference type="NCBI Taxonomy" id="330879"/>
    <lineage>
        <taxon>Eukaryota</taxon>
        <taxon>Fungi</taxon>
        <taxon>Dikarya</taxon>
        <taxon>Ascomycota</taxon>
        <taxon>Pezizomycotina</taxon>
        <taxon>Eurotiomycetes</taxon>
        <taxon>Eurotiomycetidae</taxon>
        <taxon>Eurotiales</taxon>
        <taxon>Aspergillaceae</taxon>
        <taxon>Aspergillus</taxon>
        <taxon>Aspergillus subgen. Fumigati</taxon>
    </lineage>
</organism>
<reference key="1">
    <citation type="journal article" date="2005" name="Nature">
        <title>Genomic sequence of the pathogenic and allergenic filamentous fungus Aspergillus fumigatus.</title>
        <authorList>
            <person name="Nierman W.C."/>
            <person name="Pain A."/>
            <person name="Anderson M.J."/>
            <person name="Wortman J.R."/>
            <person name="Kim H.S."/>
            <person name="Arroyo J."/>
            <person name="Berriman M."/>
            <person name="Abe K."/>
            <person name="Archer D.B."/>
            <person name="Bermejo C."/>
            <person name="Bennett J.W."/>
            <person name="Bowyer P."/>
            <person name="Chen D."/>
            <person name="Collins M."/>
            <person name="Coulsen R."/>
            <person name="Davies R."/>
            <person name="Dyer P.S."/>
            <person name="Farman M.L."/>
            <person name="Fedorova N."/>
            <person name="Fedorova N.D."/>
            <person name="Feldblyum T.V."/>
            <person name="Fischer R."/>
            <person name="Fosker N."/>
            <person name="Fraser A."/>
            <person name="Garcia J.L."/>
            <person name="Garcia M.J."/>
            <person name="Goble A."/>
            <person name="Goldman G.H."/>
            <person name="Gomi K."/>
            <person name="Griffith-Jones S."/>
            <person name="Gwilliam R."/>
            <person name="Haas B.J."/>
            <person name="Haas H."/>
            <person name="Harris D.E."/>
            <person name="Horiuchi H."/>
            <person name="Huang J."/>
            <person name="Humphray S."/>
            <person name="Jimenez J."/>
            <person name="Keller N."/>
            <person name="Khouri H."/>
            <person name="Kitamoto K."/>
            <person name="Kobayashi T."/>
            <person name="Konzack S."/>
            <person name="Kulkarni R."/>
            <person name="Kumagai T."/>
            <person name="Lafton A."/>
            <person name="Latge J.-P."/>
            <person name="Li W."/>
            <person name="Lord A."/>
            <person name="Lu C."/>
            <person name="Majoros W.H."/>
            <person name="May G.S."/>
            <person name="Miller B.L."/>
            <person name="Mohamoud Y."/>
            <person name="Molina M."/>
            <person name="Monod M."/>
            <person name="Mouyna I."/>
            <person name="Mulligan S."/>
            <person name="Murphy L.D."/>
            <person name="O'Neil S."/>
            <person name="Paulsen I."/>
            <person name="Penalva M.A."/>
            <person name="Pertea M."/>
            <person name="Price C."/>
            <person name="Pritchard B.L."/>
            <person name="Quail M.A."/>
            <person name="Rabbinowitsch E."/>
            <person name="Rawlins N."/>
            <person name="Rajandream M.A."/>
            <person name="Reichard U."/>
            <person name="Renauld H."/>
            <person name="Robson G.D."/>
            <person name="Rodriguez de Cordoba S."/>
            <person name="Rodriguez-Pena J.M."/>
            <person name="Ronning C.M."/>
            <person name="Rutter S."/>
            <person name="Salzberg S.L."/>
            <person name="Sanchez M."/>
            <person name="Sanchez-Ferrero J.C."/>
            <person name="Saunders D."/>
            <person name="Seeger K."/>
            <person name="Squares R."/>
            <person name="Squares S."/>
            <person name="Takeuchi M."/>
            <person name="Tekaia F."/>
            <person name="Turner G."/>
            <person name="Vazquez de Aldana C.R."/>
            <person name="Weidman J."/>
            <person name="White O."/>
            <person name="Woodward J.R."/>
            <person name="Yu J.-H."/>
            <person name="Fraser C.M."/>
            <person name="Galagan J.E."/>
            <person name="Asai K."/>
            <person name="Machida M."/>
            <person name="Hall N."/>
            <person name="Barrell B.G."/>
            <person name="Denning D.W."/>
        </authorList>
    </citation>
    <scope>NUCLEOTIDE SEQUENCE [LARGE SCALE GENOMIC DNA]</scope>
    <source>
        <strain>ATCC MYA-4609 / CBS 101355 / FGSC A1100 / Af293</strain>
    </source>
</reference>